<organism>
    <name type="scientific">Homo sapiens</name>
    <name type="common">Human</name>
    <dbReference type="NCBI Taxonomy" id="9606"/>
    <lineage>
        <taxon>Eukaryota</taxon>
        <taxon>Metazoa</taxon>
        <taxon>Chordata</taxon>
        <taxon>Craniata</taxon>
        <taxon>Vertebrata</taxon>
        <taxon>Euteleostomi</taxon>
        <taxon>Mammalia</taxon>
        <taxon>Eutheria</taxon>
        <taxon>Euarchontoglires</taxon>
        <taxon>Primates</taxon>
        <taxon>Haplorrhini</taxon>
        <taxon>Catarrhini</taxon>
        <taxon>Hominidae</taxon>
        <taxon>Homo</taxon>
    </lineage>
</organism>
<sequence>MEASVILPILKKKLAFLSGGKDRRSGLILTIPLCLEQTNMDELSVTLDYLLSIPSEKCKARGFTVIVDGRKSQWNVVKTVVVMLQNVVPAEVSLVCVVKPDEFWDKKVTHFCFWKEKDRLGFEVILVSANKLTRYIEPCQLTEDFGGSLTYDHMDWLNKRLVFEKFTKESTSLLDELALINNGSDKGNQQEKERSVDLNFLPSVDPETVLQTGHELLSELQQRRFNGSDGGVSWSPMDDELLAQPQVMKLLDSLREQYTRYQEVCRQRSKRTQLEEIQQKVMQVVNWLEGPGSEQLRAQWGIGDSIRASQALQQKHEEIESQHSEWFAVYVELNQQIAALLNAGDEEDLVELKSLQQQLSDVCYRQASQLEFRQNLLQAALEFHGVAQDLSQQLDGLLGMLCVDVAPADGASIQQTLKLLEEKLKSVDVGLQGLREKGQGLLDQISNQASWAYGKDVTIENKENVDHIQGVMEDMQLRKQRCEDMVDVRRLKMLQMVQLFKCEEDAAQAVEWLSELLDALLKTHIRLGDDAQETKVLLEKHRKFVDVAQSTYDYGRQLLQATVVLCQSLRCTSRSSGDTLPRLNRVWKQFTIASEERVHRLEMAIAFHSNAEKILQDCPEEPEAINDEEQFDEIEAVGKSLLDRLTVPVVYPDGTEQYFGSPSDMASTAENIRDRMKLVNLKRQQLRHPEMVTTES</sequence>
<evidence type="ECO:0000255" key="1">
    <source>
        <dbReference type="PROSITE-ProRule" id="PRU00056"/>
    </source>
</evidence>
<evidence type="ECO:0000269" key="2">
    <source>
    </source>
</evidence>
<evidence type="ECO:0000269" key="3">
    <source>
    </source>
</evidence>
<evidence type="ECO:0000305" key="4"/>
<protein>
    <recommendedName>
        <fullName>SEC14 domain and spectrin repeat-containing protein 1</fullName>
    </recommendedName>
    <alternativeName>
        <fullName>Huntingtin-interacting protein-like protein</fullName>
    </alternativeName>
    <alternativeName>
        <fullName>Protein Solo</fullName>
    </alternativeName>
</protein>
<accession>Q86VW0</accession>
<accession>Q53R38</accession>
<accession>Q53SP3</accession>
<accession>Q5GM69</accession>
<accession>Q8N6M1</accession>
<accession>Q96LQ2</accession>
<feature type="chain" id="PRO_0000309479" description="SEC14 domain and spectrin repeat-containing protein 1">
    <location>
        <begin position="1"/>
        <end position="696"/>
    </location>
</feature>
<feature type="domain" description="CRAL-TRIO" evidence="1">
    <location>
        <begin position="1"/>
        <end position="153"/>
    </location>
</feature>
<feature type="repeat" description="Spectrin 1">
    <location>
        <begin position="275"/>
        <end position="378"/>
    </location>
</feature>
<feature type="repeat" description="Spectrin 2">
    <location>
        <begin position="381"/>
        <end position="494"/>
    </location>
</feature>
<feature type="repeat" description="Spectrin 3">
    <location>
        <begin position="500"/>
        <end position="602"/>
    </location>
</feature>
<feature type="sequence variant" id="VAR_036963" description="In dbSNP:rs17854501." evidence="2">
    <original>Y</original>
    <variation>F</variation>
    <location>
        <position position="49"/>
    </location>
</feature>
<feature type="sequence variant" id="VAR_051919" description="In dbSNP:rs1047994.">
    <original>V</original>
    <variation>A</variation>
    <location>
        <position position="563"/>
    </location>
</feature>
<feature type="sequence conflict" description="In Ref. 1; AAP47744." evidence="4" ref="1">
    <original>Q</original>
    <variation>H</variation>
    <location>
        <position position="508"/>
    </location>
</feature>
<keyword id="KW-1267">Proteomics identification</keyword>
<keyword id="KW-1185">Reference proteome</keyword>
<keyword id="KW-0677">Repeat</keyword>
<reference key="1">
    <citation type="submission" date="2003-01" db="EMBL/GenBank/DDBJ databases">
        <authorList>
            <person name="Xu J."/>
            <person name="Xie Y."/>
            <person name="Mao Y."/>
        </authorList>
    </citation>
    <scope>NUCLEOTIDE SEQUENCE [MRNA]</scope>
</reference>
<reference key="2">
    <citation type="journal article" date="2005" name="Nature">
        <title>Generation and annotation of the DNA sequences of human chromosomes 2 and 4.</title>
        <authorList>
            <person name="Hillier L.W."/>
            <person name="Graves T.A."/>
            <person name="Fulton R.S."/>
            <person name="Fulton L.A."/>
            <person name="Pepin K.H."/>
            <person name="Minx P."/>
            <person name="Wagner-McPherson C."/>
            <person name="Layman D."/>
            <person name="Wylie K."/>
            <person name="Sekhon M."/>
            <person name="Becker M.C."/>
            <person name="Fewell G.A."/>
            <person name="Delehaunty K.D."/>
            <person name="Miner T.L."/>
            <person name="Nash W.E."/>
            <person name="Kremitzki C."/>
            <person name="Oddy L."/>
            <person name="Du H."/>
            <person name="Sun H."/>
            <person name="Bradshaw-Cordum H."/>
            <person name="Ali J."/>
            <person name="Carter J."/>
            <person name="Cordes M."/>
            <person name="Harris A."/>
            <person name="Isak A."/>
            <person name="van Brunt A."/>
            <person name="Nguyen C."/>
            <person name="Du F."/>
            <person name="Courtney L."/>
            <person name="Kalicki J."/>
            <person name="Ozersky P."/>
            <person name="Abbott S."/>
            <person name="Armstrong J."/>
            <person name="Belter E.A."/>
            <person name="Caruso L."/>
            <person name="Cedroni M."/>
            <person name="Cotton M."/>
            <person name="Davidson T."/>
            <person name="Desai A."/>
            <person name="Elliott G."/>
            <person name="Erb T."/>
            <person name="Fronick C."/>
            <person name="Gaige T."/>
            <person name="Haakenson W."/>
            <person name="Haglund K."/>
            <person name="Holmes A."/>
            <person name="Harkins R."/>
            <person name="Kim K."/>
            <person name="Kruchowski S.S."/>
            <person name="Strong C.M."/>
            <person name="Grewal N."/>
            <person name="Goyea E."/>
            <person name="Hou S."/>
            <person name="Levy A."/>
            <person name="Martinka S."/>
            <person name="Mead K."/>
            <person name="McLellan M.D."/>
            <person name="Meyer R."/>
            <person name="Randall-Maher J."/>
            <person name="Tomlinson C."/>
            <person name="Dauphin-Kohlberg S."/>
            <person name="Kozlowicz-Reilly A."/>
            <person name="Shah N."/>
            <person name="Swearengen-Shahid S."/>
            <person name="Snider J."/>
            <person name="Strong J.T."/>
            <person name="Thompson J."/>
            <person name="Yoakum M."/>
            <person name="Leonard S."/>
            <person name="Pearman C."/>
            <person name="Trani L."/>
            <person name="Radionenko M."/>
            <person name="Waligorski J.E."/>
            <person name="Wang C."/>
            <person name="Rock S.M."/>
            <person name="Tin-Wollam A.-M."/>
            <person name="Maupin R."/>
            <person name="Latreille P."/>
            <person name="Wendl M.C."/>
            <person name="Yang S.-P."/>
            <person name="Pohl C."/>
            <person name="Wallis J.W."/>
            <person name="Spieth J."/>
            <person name="Bieri T.A."/>
            <person name="Berkowicz N."/>
            <person name="Nelson J.O."/>
            <person name="Osborne J."/>
            <person name="Ding L."/>
            <person name="Meyer R."/>
            <person name="Sabo A."/>
            <person name="Shotland Y."/>
            <person name="Sinha P."/>
            <person name="Wohldmann P.E."/>
            <person name="Cook L.L."/>
            <person name="Hickenbotham M.T."/>
            <person name="Eldred J."/>
            <person name="Williams D."/>
            <person name="Jones T.A."/>
            <person name="She X."/>
            <person name="Ciccarelli F.D."/>
            <person name="Izaurralde E."/>
            <person name="Taylor J."/>
            <person name="Schmutz J."/>
            <person name="Myers R.M."/>
            <person name="Cox D.R."/>
            <person name="Huang X."/>
            <person name="McPherson J.D."/>
            <person name="Mardis E.R."/>
            <person name="Clifton S.W."/>
            <person name="Warren W.C."/>
            <person name="Chinwalla A.T."/>
            <person name="Eddy S.R."/>
            <person name="Marra M.A."/>
            <person name="Ovcharenko I."/>
            <person name="Furey T.S."/>
            <person name="Miller W."/>
            <person name="Eichler E.E."/>
            <person name="Bork P."/>
            <person name="Suyama M."/>
            <person name="Torrents D."/>
            <person name="Waterston R.H."/>
            <person name="Wilson R.K."/>
        </authorList>
    </citation>
    <scope>NUCLEOTIDE SEQUENCE [LARGE SCALE GENOMIC DNA]</scope>
</reference>
<reference key="3">
    <citation type="journal article" date="2004" name="Genome Res.">
        <title>The status, quality, and expansion of the NIH full-length cDNA project: the Mammalian Gene Collection (MGC).</title>
        <authorList>
            <consortium name="The MGC Project Team"/>
        </authorList>
    </citation>
    <scope>NUCLEOTIDE SEQUENCE [LARGE SCALE MRNA]</scope>
    <scope>VARIANT PHE-49</scope>
    <source>
        <tissue>Brain</tissue>
        <tissue>Urinary bladder</tissue>
    </source>
</reference>
<reference key="4">
    <citation type="journal article" date="2004" name="Nat. Genet.">
        <title>Complete sequencing and characterization of 21,243 full-length human cDNAs.</title>
        <authorList>
            <person name="Ota T."/>
            <person name="Suzuki Y."/>
            <person name="Nishikawa T."/>
            <person name="Otsuki T."/>
            <person name="Sugiyama T."/>
            <person name="Irie R."/>
            <person name="Wakamatsu A."/>
            <person name="Hayashi K."/>
            <person name="Sato H."/>
            <person name="Nagai K."/>
            <person name="Kimura K."/>
            <person name="Makita H."/>
            <person name="Sekine M."/>
            <person name="Obayashi M."/>
            <person name="Nishi T."/>
            <person name="Shibahara T."/>
            <person name="Tanaka T."/>
            <person name="Ishii S."/>
            <person name="Yamamoto J."/>
            <person name="Saito K."/>
            <person name="Kawai Y."/>
            <person name="Isono Y."/>
            <person name="Nakamura Y."/>
            <person name="Nagahari K."/>
            <person name="Murakami K."/>
            <person name="Yasuda T."/>
            <person name="Iwayanagi T."/>
            <person name="Wagatsuma M."/>
            <person name="Shiratori A."/>
            <person name="Sudo H."/>
            <person name="Hosoiri T."/>
            <person name="Kaku Y."/>
            <person name="Kodaira H."/>
            <person name="Kondo H."/>
            <person name="Sugawara M."/>
            <person name="Takahashi M."/>
            <person name="Kanda K."/>
            <person name="Yokoi T."/>
            <person name="Furuya T."/>
            <person name="Kikkawa E."/>
            <person name="Omura Y."/>
            <person name="Abe K."/>
            <person name="Kamihara K."/>
            <person name="Katsuta N."/>
            <person name="Sato K."/>
            <person name="Tanikawa M."/>
            <person name="Yamazaki M."/>
            <person name="Ninomiya K."/>
            <person name="Ishibashi T."/>
            <person name="Yamashita H."/>
            <person name="Murakawa K."/>
            <person name="Fujimori K."/>
            <person name="Tanai H."/>
            <person name="Kimata M."/>
            <person name="Watanabe M."/>
            <person name="Hiraoka S."/>
            <person name="Chiba Y."/>
            <person name="Ishida S."/>
            <person name="Ono Y."/>
            <person name="Takiguchi S."/>
            <person name="Watanabe S."/>
            <person name="Yosida M."/>
            <person name="Hotuta T."/>
            <person name="Kusano J."/>
            <person name="Kanehori K."/>
            <person name="Takahashi-Fujii A."/>
            <person name="Hara H."/>
            <person name="Tanase T.-O."/>
            <person name="Nomura Y."/>
            <person name="Togiya S."/>
            <person name="Komai F."/>
            <person name="Hara R."/>
            <person name="Takeuchi K."/>
            <person name="Arita M."/>
            <person name="Imose N."/>
            <person name="Musashino K."/>
            <person name="Yuuki H."/>
            <person name="Oshima A."/>
            <person name="Sasaki N."/>
            <person name="Aotsuka S."/>
            <person name="Yoshikawa Y."/>
            <person name="Matsunawa H."/>
            <person name="Ichihara T."/>
            <person name="Shiohata N."/>
            <person name="Sano S."/>
            <person name="Moriya S."/>
            <person name="Momiyama H."/>
            <person name="Satoh N."/>
            <person name="Takami S."/>
            <person name="Terashima Y."/>
            <person name="Suzuki O."/>
            <person name="Nakagawa S."/>
            <person name="Senoh A."/>
            <person name="Mizoguchi H."/>
            <person name="Goto Y."/>
            <person name="Shimizu F."/>
            <person name="Wakebe H."/>
            <person name="Hishigaki H."/>
            <person name="Watanabe T."/>
            <person name="Sugiyama A."/>
            <person name="Takemoto M."/>
            <person name="Kawakami B."/>
            <person name="Yamazaki M."/>
            <person name="Watanabe K."/>
            <person name="Kumagai A."/>
            <person name="Itakura S."/>
            <person name="Fukuzumi Y."/>
            <person name="Fujimori Y."/>
            <person name="Komiyama M."/>
            <person name="Tashiro H."/>
            <person name="Tanigami A."/>
            <person name="Fujiwara T."/>
            <person name="Ono T."/>
            <person name="Yamada K."/>
            <person name="Fujii Y."/>
            <person name="Ozaki K."/>
            <person name="Hirao M."/>
            <person name="Ohmori Y."/>
            <person name="Kawabata A."/>
            <person name="Hikiji T."/>
            <person name="Kobatake N."/>
            <person name="Inagaki H."/>
            <person name="Ikema Y."/>
            <person name="Okamoto S."/>
            <person name="Okitani R."/>
            <person name="Kawakami T."/>
            <person name="Noguchi S."/>
            <person name="Itoh T."/>
            <person name="Shigeta K."/>
            <person name="Senba T."/>
            <person name="Matsumura K."/>
            <person name="Nakajima Y."/>
            <person name="Mizuno T."/>
            <person name="Morinaga M."/>
            <person name="Sasaki M."/>
            <person name="Togashi T."/>
            <person name="Oyama M."/>
            <person name="Hata H."/>
            <person name="Watanabe M."/>
            <person name="Komatsu T."/>
            <person name="Mizushima-Sugano J."/>
            <person name="Satoh T."/>
            <person name="Shirai Y."/>
            <person name="Takahashi Y."/>
            <person name="Nakagawa K."/>
            <person name="Okumura K."/>
            <person name="Nagase T."/>
            <person name="Nomura N."/>
            <person name="Kikuchi H."/>
            <person name="Masuho Y."/>
            <person name="Yamashita R."/>
            <person name="Nakai K."/>
            <person name="Yada T."/>
            <person name="Nakamura Y."/>
            <person name="Ohara O."/>
            <person name="Isogai T."/>
            <person name="Sugano S."/>
        </authorList>
    </citation>
    <scope>NUCLEOTIDE SEQUENCE [LARGE SCALE MRNA] OF 462-696</scope>
</reference>
<reference key="5">
    <citation type="journal article" date="2010" name="J. Biol. Chem.">
        <title>The phospholipid-binding protein SESTD1 is a novel regulator of the transient receptor potential channels TRPC4 and TRPC5.</title>
        <authorList>
            <person name="Miehe S."/>
            <person name="Bieberstein A."/>
            <person name="Arnould I."/>
            <person name="Ihdene O."/>
            <person name="Rutten H."/>
            <person name="Strubing C."/>
        </authorList>
    </citation>
    <scope>FUNCTION</scope>
    <scope>INTERACTION WITH TRPC4; TRPC5 AND CTNNB1</scope>
    <scope>TISSUE SPECIFICITY</scope>
</reference>
<comment type="function">
    <text evidence="3">May act as the primary docking protein directing membrane turnover and assembly of the transient receptor potential channels TRPC4 and TRPC5. Binds phospholipids such as phosphatidylinositol monophosphates, phosphatidylinositol diphosphates (PIP2s) and phosphatidic acid, but not less polar lipids including phosphatidylcholine, phosphatidylserine, and phosphatidylinositol. The binding to PIP2s is calcium dependent. Might be involved in the plasma membrane localization of CTNNB1.</text>
</comment>
<comment type="subunit">
    <text evidence="3">Interacts (via the spectrin 1 repeat) with TRPC4 and TRPC5 (via CIRB domain). Interacts with CTNNB1.</text>
</comment>
<comment type="interaction">
    <interactant intactId="EBI-6117072">
        <id>Q86VW0</id>
    </interactant>
    <interactant intactId="EBI-712912">
        <id>Q9HC52</id>
        <label>CBX8</label>
    </interactant>
    <organismsDiffer>false</organismsDiffer>
    <experiments>3</experiments>
</comment>
<comment type="interaction">
    <interactant intactId="EBI-6117072">
        <id>Q86VW0</id>
    </interactant>
    <interactant intactId="EBI-12296095">
        <id>G5E9H6</id>
        <label>DACT3</label>
    </interactant>
    <organismsDiffer>false</organismsDiffer>
    <experiments>3</experiments>
</comment>
<comment type="interaction">
    <interactant intactId="EBI-6117072">
        <id>Q86VW0</id>
    </interactant>
    <interactant intactId="EBI-713355">
        <id>Q13227</id>
        <label>GPS2</label>
    </interactant>
    <organismsDiffer>false</organismsDiffer>
    <experiments>7</experiments>
</comment>
<comment type="interaction">
    <interactant intactId="EBI-6117072">
        <id>Q86VW0</id>
    </interactant>
    <interactant intactId="EBI-12056251">
        <id>Q9ULV5-2</id>
        <label>HSF4</label>
    </interactant>
    <organismsDiffer>false</organismsDiffer>
    <experiments>3</experiments>
</comment>
<comment type="interaction">
    <interactant intactId="EBI-6117072">
        <id>Q86VW0</id>
    </interactant>
    <interactant intactId="EBI-11944935">
        <id>Q15051-2</id>
        <label>IQCB1</label>
    </interactant>
    <organismsDiffer>false</organismsDiffer>
    <experiments>3</experiments>
</comment>
<comment type="interaction">
    <interactant intactId="EBI-6117072">
        <id>Q86VW0</id>
    </interactant>
    <interactant intactId="EBI-14093916">
        <id>Q9UJ41-4</id>
        <label>RABGEF1</label>
    </interactant>
    <organismsDiffer>false</organismsDiffer>
    <experiments>3</experiments>
</comment>
<comment type="interaction">
    <interactant intactId="EBI-6117072">
        <id>Q86VW0</id>
    </interactant>
    <interactant intactId="EBI-445909">
        <id>P16949</id>
        <label>STMN1</label>
    </interactant>
    <organismsDiffer>false</organismsDiffer>
    <experiments>3</experiments>
</comment>
<comment type="interaction">
    <interactant intactId="EBI-6117072">
        <id>Q86VW0</id>
    </interactant>
    <interactant intactId="EBI-10283192">
        <id>Q96CE4</id>
        <label>STMN1</label>
    </interactant>
    <organismsDiffer>false</organismsDiffer>
    <experiments>3</experiments>
</comment>
<comment type="interaction">
    <interactant intactId="EBI-6117072">
        <id>Q86VW0</id>
    </interactant>
    <interactant intactId="EBI-714194">
        <id>Q93045</id>
        <label>STMN2</label>
    </interactant>
    <organismsDiffer>false</organismsDiffer>
    <experiments>3</experiments>
</comment>
<comment type="interaction">
    <interactant intactId="EBI-6117072">
        <id>Q86VW0</id>
    </interactant>
    <interactant intactId="EBI-747736">
        <id>Q15561</id>
        <label>TEAD4</label>
    </interactant>
    <organismsDiffer>false</organismsDiffer>
    <experiments>3</experiments>
</comment>
<comment type="interaction">
    <interactant intactId="EBI-6117072">
        <id>Q86VW0</id>
    </interactant>
    <interactant intactId="EBI-3920997">
        <id>Q96NB3</id>
        <label>ZNF830</label>
    </interactant>
    <organismsDiffer>false</organismsDiffer>
    <experiments>3</experiments>
</comment>
<comment type="tissue specificity">
    <text evidence="3">Broad expression. High expression in thalamus and brain. Significantly expressed in vasculature.</text>
</comment>
<comment type="miscellaneous">
    <text>Called SOLO because the encoded protein is related to but shorter than DUO and TRIO.</text>
</comment>
<comment type="similarity">
    <text evidence="4">Belongs to the SOLO family.</text>
</comment>
<comment type="sequence caution" evidence="4">
    <conflict type="erroneous initiation">
        <sequence resource="EMBL-CDS" id="BAB71618"/>
    </conflict>
    <text>Truncated N-terminus.</text>
</comment>
<dbReference type="EMBL" id="AY209190">
    <property type="protein sequence ID" value="AAP47744.1"/>
    <property type="molecule type" value="mRNA"/>
</dbReference>
<dbReference type="EMBL" id="AC016755">
    <property type="protein sequence ID" value="AAY24323.1"/>
    <property type="molecule type" value="Genomic_DNA"/>
</dbReference>
<dbReference type="EMBL" id="AC093911">
    <property type="protein sequence ID" value="AAY24093.1"/>
    <property type="molecule type" value="Genomic_DNA"/>
</dbReference>
<dbReference type="EMBL" id="BC029744">
    <property type="protein sequence ID" value="AAH29744.1"/>
    <property type="molecule type" value="mRNA"/>
</dbReference>
<dbReference type="EMBL" id="BC047578">
    <property type="protein sequence ID" value="AAH47578.1"/>
    <property type="molecule type" value="mRNA"/>
</dbReference>
<dbReference type="EMBL" id="AK057944">
    <property type="protein sequence ID" value="BAB71618.1"/>
    <property type="status" value="ALT_INIT"/>
    <property type="molecule type" value="mRNA"/>
</dbReference>
<dbReference type="CCDS" id="CCDS33338.1"/>
<dbReference type="PIR" id="T34530">
    <property type="entry name" value="T34530"/>
</dbReference>
<dbReference type="RefSeq" id="NP_835224.3">
    <property type="nucleotide sequence ID" value="NM_178123.5"/>
</dbReference>
<dbReference type="RefSeq" id="XP_011510441.1">
    <property type="nucleotide sequence ID" value="XM_011512139.2"/>
</dbReference>
<dbReference type="SMR" id="Q86VW0"/>
<dbReference type="BioGRID" id="124826">
    <property type="interactions" value="37"/>
</dbReference>
<dbReference type="FunCoup" id="Q86VW0">
    <property type="interactions" value="345"/>
</dbReference>
<dbReference type="IntAct" id="Q86VW0">
    <property type="interactions" value="36"/>
</dbReference>
<dbReference type="STRING" id="9606.ENSP00000415332"/>
<dbReference type="SwissLipids" id="SLP:000001538"/>
<dbReference type="iPTMnet" id="Q86VW0"/>
<dbReference type="PhosphoSitePlus" id="Q86VW0"/>
<dbReference type="BioMuta" id="SESTD1"/>
<dbReference type="DMDM" id="160358740"/>
<dbReference type="jPOST" id="Q86VW0"/>
<dbReference type="MassIVE" id="Q86VW0"/>
<dbReference type="PaxDb" id="9606-ENSP00000415332"/>
<dbReference type="PeptideAtlas" id="Q86VW0"/>
<dbReference type="ProteomicsDB" id="70078"/>
<dbReference type="Pumba" id="Q86VW0"/>
<dbReference type="Antibodypedia" id="47625">
    <property type="antibodies" value="133 antibodies from 23 providers"/>
</dbReference>
<dbReference type="DNASU" id="91404"/>
<dbReference type="Ensembl" id="ENST00000428443.8">
    <property type="protein sequence ID" value="ENSP00000415332.2"/>
    <property type="gene ID" value="ENSG00000187231.14"/>
</dbReference>
<dbReference type="GeneID" id="91404"/>
<dbReference type="KEGG" id="hsa:91404"/>
<dbReference type="MANE-Select" id="ENST00000428443.8">
    <property type="protein sequence ID" value="ENSP00000415332.2"/>
    <property type="RefSeq nucleotide sequence ID" value="NM_178123.5"/>
    <property type="RefSeq protein sequence ID" value="NP_835224.3"/>
</dbReference>
<dbReference type="UCSC" id="uc002uni.5">
    <property type="organism name" value="human"/>
</dbReference>
<dbReference type="AGR" id="HGNC:18379"/>
<dbReference type="CTD" id="91404"/>
<dbReference type="DisGeNET" id="91404"/>
<dbReference type="GeneCards" id="SESTD1"/>
<dbReference type="HGNC" id="HGNC:18379">
    <property type="gene designation" value="SESTD1"/>
</dbReference>
<dbReference type="HPA" id="ENSG00000187231">
    <property type="expression patterns" value="Low tissue specificity"/>
</dbReference>
<dbReference type="MIM" id="621011">
    <property type="type" value="gene"/>
</dbReference>
<dbReference type="neXtProt" id="NX_Q86VW0"/>
<dbReference type="OpenTargets" id="ENSG00000187231"/>
<dbReference type="PharmGKB" id="PA38534"/>
<dbReference type="VEuPathDB" id="HostDB:ENSG00000187231"/>
<dbReference type="eggNOG" id="KOG4240">
    <property type="taxonomic scope" value="Eukaryota"/>
</dbReference>
<dbReference type="GeneTree" id="ENSGT00730000111148"/>
<dbReference type="HOGENOM" id="CLU_010440_1_0_1"/>
<dbReference type="InParanoid" id="Q86VW0"/>
<dbReference type="OMA" id="PDAFWDK"/>
<dbReference type="OrthoDB" id="5859883at2759"/>
<dbReference type="PAN-GO" id="Q86VW0">
    <property type="GO annotations" value="6 GO annotations based on evolutionary models"/>
</dbReference>
<dbReference type="PhylomeDB" id="Q86VW0"/>
<dbReference type="TreeFam" id="TF332003"/>
<dbReference type="PathwayCommons" id="Q86VW0"/>
<dbReference type="SignaLink" id="Q86VW0"/>
<dbReference type="BioGRID-ORCS" id="91404">
    <property type="hits" value="10 hits in 1152 CRISPR screens"/>
</dbReference>
<dbReference type="CD-CODE" id="FB4E32DD">
    <property type="entry name" value="Presynaptic clusters and postsynaptic densities"/>
</dbReference>
<dbReference type="ChiTaRS" id="SESTD1">
    <property type="organism name" value="human"/>
</dbReference>
<dbReference type="GeneWiki" id="SESTD1"/>
<dbReference type="GenomeRNAi" id="91404"/>
<dbReference type="Pharos" id="Q86VW0">
    <property type="development level" value="Tbio"/>
</dbReference>
<dbReference type="PRO" id="PR:Q86VW0"/>
<dbReference type="Proteomes" id="UP000005640">
    <property type="component" value="Chromosome 2"/>
</dbReference>
<dbReference type="RNAct" id="Q86VW0">
    <property type="molecule type" value="protein"/>
</dbReference>
<dbReference type="Bgee" id="ENSG00000187231">
    <property type="expression patterns" value="Expressed in calcaneal tendon and 188 other cell types or tissues"/>
</dbReference>
<dbReference type="ExpressionAtlas" id="Q86VW0">
    <property type="expression patterns" value="baseline and differential"/>
</dbReference>
<dbReference type="GO" id="GO:0045111">
    <property type="term" value="C:intermediate filament cytoskeleton"/>
    <property type="evidence" value="ECO:0000314"/>
    <property type="project" value="HPA"/>
</dbReference>
<dbReference type="GO" id="GO:0070300">
    <property type="term" value="F:phosphatidic acid binding"/>
    <property type="evidence" value="ECO:0000314"/>
    <property type="project" value="UniProtKB"/>
</dbReference>
<dbReference type="GO" id="GO:0043325">
    <property type="term" value="F:phosphatidylinositol-3,4-bisphosphate binding"/>
    <property type="evidence" value="ECO:0000314"/>
    <property type="project" value="UniProtKB"/>
</dbReference>
<dbReference type="GO" id="GO:0080025">
    <property type="term" value="F:phosphatidylinositol-3,5-bisphosphate binding"/>
    <property type="evidence" value="ECO:0000314"/>
    <property type="project" value="UniProtKB"/>
</dbReference>
<dbReference type="GO" id="GO:0032266">
    <property type="term" value="F:phosphatidylinositol-3-phosphate binding"/>
    <property type="evidence" value="ECO:0000314"/>
    <property type="project" value="UniProtKB"/>
</dbReference>
<dbReference type="GO" id="GO:0005546">
    <property type="term" value="F:phosphatidylinositol-4,5-bisphosphate binding"/>
    <property type="evidence" value="ECO:0000314"/>
    <property type="project" value="UniProtKB"/>
</dbReference>
<dbReference type="GO" id="GO:0070273">
    <property type="term" value="F:phosphatidylinositol-4-phosphate binding"/>
    <property type="evidence" value="ECO:0000314"/>
    <property type="project" value="UniProtKB"/>
</dbReference>
<dbReference type="GO" id="GO:0010314">
    <property type="term" value="F:phosphatidylinositol-5-phosphate binding"/>
    <property type="evidence" value="ECO:0000314"/>
    <property type="project" value="UniProtKB"/>
</dbReference>
<dbReference type="GO" id="GO:1904878">
    <property type="term" value="P:negative regulation of calcium ion transmembrane transport via high voltage-gated calcium channel"/>
    <property type="evidence" value="ECO:0000315"/>
    <property type="project" value="UniProtKB"/>
</dbReference>
<dbReference type="FunFam" id="1.20.58.60:FF:000124">
    <property type="entry name" value="SEC14 domain and spectrin repeat-containing protein 1"/>
    <property type="match status" value="1"/>
</dbReference>
<dbReference type="FunFam" id="1.20.58.60:FF:000187">
    <property type="entry name" value="SEC14 domain and spectrin repeat-containing protein 1 isoform X2"/>
    <property type="match status" value="1"/>
</dbReference>
<dbReference type="Gene3D" id="1.20.58.60">
    <property type="match status" value="2"/>
</dbReference>
<dbReference type="InterPro" id="IPR001251">
    <property type="entry name" value="CRAL-TRIO_dom"/>
</dbReference>
<dbReference type="InterPro" id="IPR056804">
    <property type="entry name" value="Spectrin_SESTD1"/>
</dbReference>
<dbReference type="PANTHER" id="PTHR46607">
    <property type="entry name" value="SEC14 DOMAIN AND SPECTRIN REPEAT-CONTAINING PROTEIN 1"/>
    <property type="match status" value="1"/>
</dbReference>
<dbReference type="PANTHER" id="PTHR46607:SF1">
    <property type="entry name" value="SEC14 DOMAIN AND SPECTRIN REPEAT-CONTAINING PROTEIN 1"/>
    <property type="match status" value="1"/>
</dbReference>
<dbReference type="Pfam" id="PF13716">
    <property type="entry name" value="CRAL_TRIO_2"/>
    <property type="match status" value="1"/>
</dbReference>
<dbReference type="Pfam" id="PF24915">
    <property type="entry name" value="Spectrin_SESTD1"/>
    <property type="match status" value="1"/>
</dbReference>
<dbReference type="SUPFAM" id="SSF46966">
    <property type="entry name" value="Spectrin repeat"/>
    <property type="match status" value="1"/>
</dbReference>
<dbReference type="PROSITE" id="PS50191">
    <property type="entry name" value="CRAL_TRIO"/>
    <property type="match status" value="1"/>
</dbReference>
<proteinExistence type="evidence at protein level"/>
<gene>
    <name type="primary">SESTD1</name>
    <name type="synonym">SOLO</name>
</gene>
<name>SESD1_HUMAN</name>